<reference key="1">
    <citation type="submission" date="2008-10" db="EMBL/GenBank/DDBJ databases">
        <title>Genome sequence of Clostridium botulinum A2 Kyoto.</title>
        <authorList>
            <person name="Shrivastava S."/>
            <person name="Brinkac L.M."/>
            <person name="Brown J.L."/>
            <person name="Bruce D."/>
            <person name="Detter C.C."/>
            <person name="Johnson E.A."/>
            <person name="Munk C.A."/>
            <person name="Smith L.A."/>
            <person name="Smith T.J."/>
            <person name="Sutton G."/>
            <person name="Brettin T.S."/>
        </authorList>
    </citation>
    <scope>NUCLEOTIDE SEQUENCE [LARGE SCALE GENOMIC DNA]</scope>
    <source>
        <strain>Kyoto / Type A2</strain>
    </source>
</reference>
<proteinExistence type="inferred from homology"/>
<protein>
    <recommendedName>
        <fullName evidence="1">Uridine kinase</fullName>
        <ecNumber evidence="1">2.7.1.48</ecNumber>
    </recommendedName>
    <alternativeName>
        <fullName evidence="1">Cytidine monophosphokinase</fullName>
    </alternativeName>
    <alternativeName>
        <fullName evidence="1">Uridine monophosphokinase</fullName>
    </alternativeName>
</protein>
<name>URK_CLOBJ</name>
<organism>
    <name type="scientific">Clostridium botulinum (strain Kyoto / Type A2)</name>
    <dbReference type="NCBI Taxonomy" id="536232"/>
    <lineage>
        <taxon>Bacteria</taxon>
        <taxon>Bacillati</taxon>
        <taxon>Bacillota</taxon>
        <taxon>Clostridia</taxon>
        <taxon>Eubacteriales</taxon>
        <taxon>Clostridiaceae</taxon>
        <taxon>Clostridium</taxon>
    </lineage>
</organism>
<sequence length="206" mass="23892">MKRPVLIGITGGTGSGKSTVAKEIYNKFDEACIAMIEQDSYYKDQSSMPFEERCKKNYDHPDAFDNELLIDHLKNLIDLNVIEKPIYDFEAHNRKEETIKVKPRDIIIVEGILVLQDPRVRELLDIKIYVDTDADVRIIRRLLRDINERGRTVDSVINQYLTVVRPMHMQFIEPSKRYADIIIPEGGHNRVAVDMMVANIKHLLQE</sequence>
<accession>C1FSX6</accession>
<evidence type="ECO:0000255" key="1">
    <source>
        <dbReference type="HAMAP-Rule" id="MF_00551"/>
    </source>
</evidence>
<keyword id="KW-0067">ATP-binding</keyword>
<keyword id="KW-0963">Cytoplasm</keyword>
<keyword id="KW-0418">Kinase</keyword>
<keyword id="KW-0547">Nucleotide-binding</keyword>
<keyword id="KW-0808">Transferase</keyword>
<feature type="chain" id="PRO_1000200511" description="Uridine kinase">
    <location>
        <begin position="1"/>
        <end position="206"/>
    </location>
</feature>
<feature type="binding site" evidence="1">
    <location>
        <begin position="11"/>
        <end position="18"/>
    </location>
    <ligand>
        <name>ATP</name>
        <dbReference type="ChEBI" id="CHEBI:30616"/>
    </ligand>
</feature>
<dbReference type="EC" id="2.7.1.48" evidence="1"/>
<dbReference type="EMBL" id="CP001581">
    <property type="protein sequence ID" value="ACO86988.1"/>
    <property type="molecule type" value="Genomic_DNA"/>
</dbReference>
<dbReference type="RefSeq" id="WP_012705629.1">
    <property type="nucleotide sequence ID" value="NC_012563.1"/>
</dbReference>
<dbReference type="SMR" id="C1FSX6"/>
<dbReference type="KEGG" id="cby:CLM_2861"/>
<dbReference type="eggNOG" id="COG0572">
    <property type="taxonomic scope" value="Bacteria"/>
</dbReference>
<dbReference type="HOGENOM" id="CLU_021278_1_2_9"/>
<dbReference type="UniPathway" id="UPA00574">
    <property type="reaction ID" value="UER00637"/>
</dbReference>
<dbReference type="UniPathway" id="UPA00579">
    <property type="reaction ID" value="UER00640"/>
</dbReference>
<dbReference type="Proteomes" id="UP000001374">
    <property type="component" value="Chromosome"/>
</dbReference>
<dbReference type="GO" id="GO:0005737">
    <property type="term" value="C:cytoplasm"/>
    <property type="evidence" value="ECO:0007669"/>
    <property type="project" value="UniProtKB-SubCell"/>
</dbReference>
<dbReference type="GO" id="GO:0005524">
    <property type="term" value="F:ATP binding"/>
    <property type="evidence" value="ECO:0007669"/>
    <property type="project" value="UniProtKB-UniRule"/>
</dbReference>
<dbReference type="GO" id="GO:0043771">
    <property type="term" value="F:cytidine kinase activity"/>
    <property type="evidence" value="ECO:0007669"/>
    <property type="project" value="RHEA"/>
</dbReference>
<dbReference type="GO" id="GO:0004849">
    <property type="term" value="F:uridine kinase activity"/>
    <property type="evidence" value="ECO:0007669"/>
    <property type="project" value="UniProtKB-UniRule"/>
</dbReference>
<dbReference type="GO" id="GO:0044211">
    <property type="term" value="P:CTP salvage"/>
    <property type="evidence" value="ECO:0007669"/>
    <property type="project" value="UniProtKB-UniRule"/>
</dbReference>
<dbReference type="GO" id="GO:0044206">
    <property type="term" value="P:UMP salvage"/>
    <property type="evidence" value="ECO:0007669"/>
    <property type="project" value="UniProtKB-UniRule"/>
</dbReference>
<dbReference type="CDD" id="cd02023">
    <property type="entry name" value="UMPK"/>
    <property type="match status" value="1"/>
</dbReference>
<dbReference type="Gene3D" id="3.40.50.300">
    <property type="entry name" value="P-loop containing nucleotide triphosphate hydrolases"/>
    <property type="match status" value="1"/>
</dbReference>
<dbReference type="HAMAP" id="MF_00551">
    <property type="entry name" value="Uridine_kinase"/>
    <property type="match status" value="1"/>
</dbReference>
<dbReference type="InterPro" id="IPR027417">
    <property type="entry name" value="P-loop_NTPase"/>
</dbReference>
<dbReference type="InterPro" id="IPR006083">
    <property type="entry name" value="PRK/URK"/>
</dbReference>
<dbReference type="InterPro" id="IPR026008">
    <property type="entry name" value="Uridine_kinase"/>
</dbReference>
<dbReference type="InterPro" id="IPR000764">
    <property type="entry name" value="Uridine_kinase-like"/>
</dbReference>
<dbReference type="NCBIfam" id="NF004018">
    <property type="entry name" value="PRK05480.1"/>
    <property type="match status" value="1"/>
</dbReference>
<dbReference type="NCBIfam" id="TIGR00235">
    <property type="entry name" value="udk"/>
    <property type="match status" value="1"/>
</dbReference>
<dbReference type="PANTHER" id="PTHR10285">
    <property type="entry name" value="URIDINE KINASE"/>
    <property type="match status" value="1"/>
</dbReference>
<dbReference type="Pfam" id="PF00485">
    <property type="entry name" value="PRK"/>
    <property type="match status" value="1"/>
</dbReference>
<dbReference type="PRINTS" id="PR00988">
    <property type="entry name" value="URIDINKINASE"/>
</dbReference>
<dbReference type="SUPFAM" id="SSF52540">
    <property type="entry name" value="P-loop containing nucleoside triphosphate hydrolases"/>
    <property type="match status" value="1"/>
</dbReference>
<comment type="catalytic activity">
    <reaction evidence="1">
        <text>uridine + ATP = UMP + ADP + H(+)</text>
        <dbReference type="Rhea" id="RHEA:16825"/>
        <dbReference type="ChEBI" id="CHEBI:15378"/>
        <dbReference type="ChEBI" id="CHEBI:16704"/>
        <dbReference type="ChEBI" id="CHEBI:30616"/>
        <dbReference type="ChEBI" id="CHEBI:57865"/>
        <dbReference type="ChEBI" id="CHEBI:456216"/>
        <dbReference type="EC" id="2.7.1.48"/>
    </reaction>
</comment>
<comment type="catalytic activity">
    <reaction evidence="1">
        <text>cytidine + ATP = CMP + ADP + H(+)</text>
        <dbReference type="Rhea" id="RHEA:24674"/>
        <dbReference type="ChEBI" id="CHEBI:15378"/>
        <dbReference type="ChEBI" id="CHEBI:17562"/>
        <dbReference type="ChEBI" id="CHEBI:30616"/>
        <dbReference type="ChEBI" id="CHEBI:60377"/>
        <dbReference type="ChEBI" id="CHEBI:456216"/>
        <dbReference type="EC" id="2.7.1.48"/>
    </reaction>
</comment>
<comment type="pathway">
    <text evidence="1">Pyrimidine metabolism; CTP biosynthesis via salvage pathway; CTP from cytidine: step 1/3.</text>
</comment>
<comment type="pathway">
    <text evidence="1">Pyrimidine metabolism; UMP biosynthesis via salvage pathway; UMP from uridine: step 1/1.</text>
</comment>
<comment type="subcellular location">
    <subcellularLocation>
        <location evidence="1">Cytoplasm</location>
    </subcellularLocation>
</comment>
<comment type="similarity">
    <text evidence="1">Belongs to the uridine kinase family.</text>
</comment>
<gene>
    <name evidence="1" type="primary">udk</name>
    <name type="ordered locus">CLM_2861</name>
</gene>